<proteinExistence type="inferred from homology"/>
<feature type="chain" id="PRO_1000082334" description="UDP-2,3-diacylglucosamine hydrolase">
    <location>
        <begin position="1"/>
        <end position="243"/>
    </location>
</feature>
<feature type="binding site" evidence="1">
    <location>
        <position position="9"/>
    </location>
    <ligand>
        <name>Mn(2+)</name>
        <dbReference type="ChEBI" id="CHEBI:29035"/>
        <label>1</label>
    </ligand>
</feature>
<feature type="binding site" evidence="1">
    <location>
        <position position="11"/>
    </location>
    <ligand>
        <name>Mn(2+)</name>
        <dbReference type="ChEBI" id="CHEBI:29035"/>
        <label>1</label>
    </ligand>
</feature>
<feature type="binding site" evidence="1">
    <location>
        <position position="42"/>
    </location>
    <ligand>
        <name>Mn(2+)</name>
        <dbReference type="ChEBI" id="CHEBI:29035"/>
        <label>1</label>
    </ligand>
</feature>
<feature type="binding site" evidence="1">
    <location>
        <position position="42"/>
    </location>
    <ligand>
        <name>Mn(2+)</name>
        <dbReference type="ChEBI" id="CHEBI:29035"/>
        <label>2</label>
    </ligand>
</feature>
<feature type="binding site" evidence="1">
    <location>
        <begin position="79"/>
        <end position="80"/>
    </location>
    <ligand>
        <name>substrate</name>
    </ligand>
</feature>
<feature type="binding site" evidence="1">
    <location>
        <position position="79"/>
    </location>
    <ligand>
        <name>Mn(2+)</name>
        <dbReference type="ChEBI" id="CHEBI:29035"/>
        <label>2</label>
    </ligand>
</feature>
<feature type="binding site" evidence="1">
    <location>
        <position position="114"/>
    </location>
    <ligand>
        <name>Mn(2+)</name>
        <dbReference type="ChEBI" id="CHEBI:29035"/>
        <label>2</label>
    </ligand>
</feature>
<feature type="binding site" evidence="1">
    <location>
        <position position="122"/>
    </location>
    <ligand>
        <name>substrate</name>
    </ligand>
</feature>
<feature type="binding site" evidence="1">
    <location>
        <position position="160"/>
    </location>
    <ligand>
        <name>substrate</name>
    </ligand>
</feature>
<feature type="binding site" evidence="1">
    <location>
        <position position="164"/>
    </location>
    <ligand>
        <name>substrate</name>
    </ligand>
</feature>
<feature type="binding site" evidence="1">
    <location>
        <position position="195"/>
    </location>
    <ligand>
        <name>Mn(2+)</name>
        <dbReference type="ChEBI" id="CHEBI:29035"/>
        <label>2</label>
    </ligand>
</feature>
<feature type="binding site" evidence="1">
    <location>
        <position position="195"/>
    </location>
    <ligand>
        <name>substrate</name>
    </ligand>
</feature>
<feature type="binding site" evidence="1">
    <location>
        <position position="197"/>
    </location>
    <ligand>
        <name>Mn(2+)</name>
        <dbReference type="ChEBI" id="CHEBI:29035"/>
        <label>1</label>
    </ligand>
</feature>
<comment type="function">
    <text evidence="1">Hydrolyzes the pyrophosphate bond of UDP-2,3-diacylglucosamine to yield 2,3-diacylglucosamine 1-phosphate (lipid X) and UMP by catalyzing the attack of water at the alpha-P atom. Involved in the biosynthesis of lipid A, a phosphorylated glycolipid that anchors the lipopolysaccharide to the outer membrane of the cell.</text>
</comment>
<comment type="catalytic activity">
    <reaction evidence="1">
        <text>UDP-2-N,3-O-bis[(3R)-3-hydroxytetradecanoyl]-alpha-D-glucosamine + H2O = 2-N,3-O-bis[(3R)-3-hydroxytetradecanoyl]-alpha-D-glucosaminyl 1-phosphate + UMP + 2 H(+)</text>
        <dbReference type="Rhea" id="RHEA:25213"/>
        <dbReference type="ChEBI" id="CHEBI:15377"/>
        <dbReference type="ChEBI" id="CHEBI:15378"/>
        <dbReference type="ChEBI" id="CHEBI:57865"/>
        <dbReference type="ChEBI" id="CHEBI:57957"/>
        <dbReference type="ChEBI" id="CHEBI:78847"/>
        <dbReference type="EC" id="3.6.1.54"/>
    </reaction>
</comment>
<comment type="cofactor">
    <cofactor evidence="1">
        <name>Mn(2+)</name>
        <dbReference type="ChEBI" id="CHEBI:29035"/>
    </cofactor>
    <text evidence="1">Binds 2 Mn(2+) ions per subunit in a binuclear metal center.</text>
</comment>
<comment type="pathway">
    <text evidence="1">Glycolipid biosynthesis; lipid IV(A) biosynthesis; lipid IV(A) from (3R)-3-hydroxytetradecanoyl-[acyl-carrier-protein] and UDP-N-acetyl-alpha-D-glucosamine: step 4/6.</text>
</comment>
<comment type="subcellular location">
    <subcellularLocation>
        <location evidence="1">Cell inner membrane</location>
        <topology evidence="1">Peripheral membrane protein</topology>
        <orientation evidence="1">Cytoplasmic side</orientation>
    </subcellularLocation>
</comment>
<comment type="similarity">
    <text evidence="1">Belongs to the LpxH family.</text>
</comment>
<name>LPXH_COXBR</name>
<evidence type="ECO:0000255" key="1">
    <source>
        <dbReference type="HAMAP-Rule" id="MF_00575"/>
    </source>
</evidence>
<dbReference type="EC" id="3.6.1.54" evidence="1"/>
<dbReference type="EMBL" id="CP000890">
    <property type="protein sequence ID" value="ABX77357.1"/>
    <property type="molecule type" value="Genomic_DNA"/>
</dbReference>
<dbReference type="RefSeq" id="WP_010958262.1">
    <property type="nucleotide sequence ID" value="NC_010117.1"/>
</dbReference>
<dbReference type="SMR" id="A9N926"/>
<dbReference type="KEGG" id="cbs:COXBURSA331_A1668"/>
<dbReference type="HOGENOM" id="CLU_074586_0_0_6"/>
<dbReference type="UniPathway" id="UPA00359">
    <property type="reaction ID" value="UER00480"/>
</dbReference>
<dbReference type="GO" id="GO:0005737">
    <property type="term" value="C:cytoplasm"/>
    <property type="evidence" value="ECO:0007669"/>
    <property type="project" value="InterPro"/>
</dbReference>
<dbReference type="GO" id="GO:0019897">
    <property type="term" value="C:extrinsic component of plasma membrane"/>
    <property type="evidence" value="ECO:0007669"/>
    <property type="project" value="UniProtKB-UniRule"/>
</dbReference>
<dbReference type="GO" id="GO:0030145">
    <property type="term" value="F:manganese ion binding"/>
    <property type="evidence" value="ECO:0007669"/>
    <property type="project" value="UniProtKB-UniRule"/>
</dbReference>
<dbReference type="GO" id="GO:0008758">
    <property type="term" value="F:UDP-2,3-diacylglucosamine hydrolase activity"/>
    <property type="evidence" value="ECO:0007669"/>
    <property type="project" value="UniProtKB-UniRule"/>
</dbReference>
<dbReference type="GO" id="GO:0009245">
    <property type="term" value="P:lipid A biosynthetic process"/>
    <property type="evidence" value="ECO:0007669"/>
    <property type="project" value="UniProtKB-UniRule"/>
</dbReference>
<dbReference type="CDD" id="cd07398">
    <property type="entry name" value="MPP_YbbF-LpxH"/>
    <property type="match status" value="1"/>
</dbReference>
<dbReference type="Gene3D" id="3.60.21.10">
    <property type="match status" value="1"/>
</dbReference>
<dbReference type="HAMAP" id="MF_00575">
    <property type="entry name" value="LpxH"/>
    <property type="match status" value="1"/>
</dbReference>
<dbReference type="InterPro" id="IPR004843">
    <property type="entry name" value="Calcineurin-like_PHP_ApaH"/>
</dbReference>
<dbReference type="InterPro" id="IPR043461">
    <property type="entry name" value="LpxH-like"/>
</dbReference>
<dbReference type="InterPro" id="IPR029052">
    <property type="entry name" value="Metallo-depent_PP-like"/>
</dbReference>
<dbReference type="InterPro" id="IPR010138">
    <property type="entry name" value="UDP-diacylglucosamine_Hdrlase"/>
</dbReference>
<dbReference type="NCBIfam" id="TIGR01854">
    <property type="entry name" value="lipid_A_lpxH"/>
    <property type="match status" value="1"/>
</dbReference>
<dbReference type="NCBIfam" id="NF003743">
    <property type="entry name" value="PRK05340.1"/>
    <property type="match status" value="1"/>
</dbReference>
<dbReference type="PANTHER" id="PTHR34990:SF1">
    <property type="entry name" value="UDP-2,3-DIACYLGLUCOSAMINE HYDROLASE"/>
    <property type="match status" value="1"/>
</dbReference>
<dbReference type="PANTHER" id="PTHR34990">
    <property type="entry name" value="UDP-2,3-DIACYLGLUCOSAMINE HYDROLASE-RELATED"/>
    <property type="match status" value="1"/>
</dbReference>
<dbReference type="Pfam" id="PF00149">
    <property type="entry name" value="Metallophos"/>
    <property type="match status" value="1"/>
</dbReference>
<dbReference type="SUPFAM" id="SSF56300">
    <property type="entry name" value="Metallo-dependent phosphatases"/>
    <property type="match status" value="1"/>
</dbReference>
<keyword id="KW-0997">Cell inner membrane</keyword>
<keyword id="KW-1003">Cell membrane</keyword>
<keyword id="KW-0378">Hydrolase</keyword>
<keyword id="KW-0441">Lipid A biosynthesis</keyword>
<keyword id="KW-0444">Lipid biosynthesis</keyword>
<keyword id="KW-0443">Lipid metabolism</keyword>
<keyword id="KW-0464">Manganese</keyword>
<keyword id="KW-0472">Membrane</keyword>
<keyword id="KW-0479">Metal-binding</keyword>
<protein>
    <recommendedName>
        <fullName evidence="1">UDP-2,3-diacylglucosamine hydrolase</fullName>
        <ecNumber evidence="1">3.6.1.54</ecNumber>
    </recommendedName>
    <alternativeName>
        <fullName evidence="1">UDP-2,3-diacylglucosamine diphosphatase</fullName>
    </alternativeName>
</protein>
<gene>
    <name evidence="1" type="primary">lpxH</name>
    <name type="ordered locus">COXBURSA331_A1668</name>
</gene>
<accession>A9N926</accession>
<reference key="1">
    <citation type="submission" date="2007-11" db="EMBL/GenBank/DDBJ databases">
        <title>Genome sequencing of phylogenetically and phenotypically diverse Coxiella burnetii isolates.</title>
        <authorList>
            <person name="Seshadri R."/>
            <person name="Samuel J.E."/>
        </authorList>
    </citation>
    <scope>NUCLEOTIDE SEQUENCE [LARGE SCALE GENOMIC DNA]</scope>
    <source>
        <strain>RSA 331 / Henzerling II</strain>
    </source>
</reference>
<organism>
    <name type="scientific">Coxiella burnetii (strain RSA 331 / Henzerling II)</name>
    <dbReference type="NCBI Taxonomy" id="360115"/>
    <lineage>
        <taxon>Bacteria</taxon>
        <taxon>Pseudomonadati</taxon>
        <taxon>Pseudomonadota</taxon>
        <taxon>Gammaproteobacteria</taxon>
        <taxon>Legionellales</taxon>
        <taxon>Coxiellaceae</taxon>
        <taxon>Coxiella</taxon>
    </lineage>
</organism>
<sequence length="243" mass="28304">MRHTLFISDLHLEEKTPSITAHFLYFLKHQAPKADAIYILGDFFEAWIGDDNQTPFNRKIIESLQTLARTKPTYFMRGNRDFLIGQRFAAMTGVSLLEDPSVIQLYNKPVLLMHGDSLCTLDHKHQAYRRKIMKPWVQKLMLSLPLSLRRKLAKKFREQSRRHNRTLSYEIKDVTPEEVNRVMKEQNVELLIHGHTHRPAIHDLTINGNPTKRIVLGAWHHGGSVLRYAQDGSFELQAFKIDL</sequence>